<sequence length="270" mass="28432">MSNLQTRIITAIVLGTITLWLTWVGGVGFTLFSIAIGLAMFYEWTELSATRQTAFSRLFGWAWLIVTGILLILDRGALLTIGFLVAGCAILLVTQWKSGRGWPAAGLFYAGFSALSLSLLRGDEPFGFTTIVFLFAVVWSTDIAAYFNGRALGGPKLAPRFSPNKTWSGAIGGAAAAVTGGLLVASLVAAPGGWGVPVLALLLSIVSQIGDLAESWVKRQFGAKDSGRLLPGHGGVLDRVDGLVAAAALLYLFGAIFAEPDVPSAIFFSF</sequence>
<protein>
    <recommendedName>
        <fullName>Phosphatidate cytidylyltransferase</fullName>
        <ecNumber>2.7.7.41</ecNumber>
    </recommendedName>
    <alternativeName>
        <fullName>CDP-DAG synthase</fullName>
    </alternativeName>
    <alternativeName>
        <fullName>CDP-DG synthase</fullName>
    </alternativeName>
    <alternativeName>
        <fullName>CDP-diacylglycerol synthase</fullName>
        <shortName>CDS</shortName>
    </alternativeName>
    <alternativeName>
        <fullName>CDP-diglyceride pyrophosphorylase</fullName>
    </alternativeName>
    <alternativeName>
        <fullName>CDP-diglyceride synthase</fullName>
    </alternativeName>
    <alternativeName>
        <fullName>CTP:phosphatidate cytidylyltransferase</fullName>
    </alternativeName>
</protein>
<reference key="1">
    <citation type="journal article" date="2002" name="Proc. Natl. Acad. Sci. U.S.A.">
        <title>The genome sequence of the facultative intracellular pathogen Brucella melitensis.</title>
        <authorList>
            <person name="DelVecchio V.G."/>
            <person name="Kapatral V."/>
            <person name="Redkar R.J."/>
            <person name="Patra G."/>
            <person name="Mujer C."/>
            <person name="Los T."/>
            <person name="Ivanova N."/>
            <person name="Anderson I."/>
            <person name="Bhattacharyya A."/>
            <person name="Lykidis A."/>
            <person name="Reznik G."/>
            <person name="Jablonski L."/>
            <person name="Larsen N."/>
            <person name="D'Souza M."/>
            <person name="Bernal A."/>
            <person name="Mazur M."/>
            <person name="Goltsman E."/>
            <person name="Selkov E."/>
            <person name="Elzer P.H."/>
            <person name="Hagius S."/>
            <person name="O'Callaghan D."/>
            <person name="Letesson J.-J."/>
            <person name="Haselkorn R."/>
            <person name="Kyrpides N.C."/>
            <person name="Overbeek R."/>
        </authorList>
    </citation>
    <scope>NUCLEOTIDE SEQUENCE [LARGE SCALE GENOMIC DNA]</scope>
    <source>
        <strain>ATCC 23456 / CCUG 17765 / NCTC 10094 / 16M</strain>
    </source>
</reference>
<feature type="chain" id="PRO_0000090729" description="Phosphatidate cytidylyltransferase">
    <location>
        <begin position="1"/>
        <end position="270"/>
    </location>
</feature>
<feature type="transmembrane region" description="Helical" evidence="2">
    <location>
        <begin position="19"/>
        <end position="39"/>
    </location>
</feature>
<feature type="transmembrane region" description="Helical" evidence="2">
    <location>
        <begin position="53"/>
        <end position="73"/>
    </location>
</feature>
<feature type="transmembrane region" description="Helical" evidence="2">
    <location>
        <begin position="76"/>
        <end position="96"/>
    </location>
</feature>
<feature type="transmembrane region" description="Helical" evidence="2">
    <location>
        <begin position="101"/>
        <end position="121"/>
    </location>
</feature>
<feature type="transmembrane region" description="Helical" evidence="2">
    <location>
        <begin position="126"/>
        <end position="146"/>
    </location>
</feature>
<feature type="transmembrane region" description="Helical" evidence="2">
    <location>
        <begin position="183"/>
        <end position="203"/>
    </location>
</feature>
<feature type="transmembrane region" description="Helical" evidence="2">
    <location>
        <begin position="248"/>
        <end position="268"/>
    </location>
</feature>
<accession>Q8YHH2</accession>
<dbReference type="EC" id="2.7.7.41"/>
<dbReference type="EMBL" id="AE008917">
    <property type="protein sequence ID" value="AAL52009.1"/>
    <property type="status" value="ALT_INIT"/>
    <property type="molecule type" value="Genomic_DNA"/>
</dbReference>
<dbReference type="PIR" id="AF3355">
    <property type="entry name" value="AF3355"/>
</dbReference>
<dbReference type="RefSeq" id="WP_004683870.1">
    <property type="nucleotide sequence ID" value="NC_003317.1"/>
</dbReference>
<dbReference type="SMR" id="Q8YHH2"/>
<dbReference type="GeneID" id="29593639"/>
<dbReference type="KEGG" id="bme:BMEI0828"/>
<dbReference type="KEGG" id="bmel:DK63_592"/>
<dbReference type="PATRIC" id="fig|224914.52.peg.617"/>
<dbReference type="eggNOG" id="COG0575">
    <property type="taxonomic scope" value="Bacteria"/>
</dbReference>
<dbReference type="PhylomeDB" id="Q8YHH2"/>
<dbReference type="UniPathway" id="UPA00557">
    <property type="reaction ID" value="UER00614"/>
</dbReference>
<dbReference type="Proteomes" id="UP000000419">
    <property type="component" value="Chromosome I"/>
</dbReference>
<dbReference type="GO" id="GO:0005886">
    <property type="term" value="C:plasma membrane"/>
    <property type="evidence" value="ECO:0007669"/>
    <property type="project" value="UniProtKB-SubCell"/>
</dbReference>
<dbReference type="GO" id="GO:0004605">
    <property type="term" value="F:phosphatidate cytidylyltransferase activity"/>
    <property type="evidence" value="ECO:0007669"/>
    <property type="project" value="UniProtKB-EC"/>
</dbReference>
<dbReference type="GO" id="GO:0016024">
    <property type="term" value="P:CDP-diacylglycerol biosynthetic process"/>
    <property type="evidence" value="ECO:0007669"/>
    <property type="project" value="UniProtKB-UniPathway"/>
</dbReference>
<dbReference type="InterPro" id="IPR000374">
    <property type="entry name" value="PC_trans"/>
</dbReference>
<dbReference type="PANTHER" id="PTHR46382">
    <property type="entry name" value="PHOSPHATIDATE CYTIDYLYLTRANSFERASE"/>
    <property type="match status" value="1"/>
</dbReference>
<dbReference type="PANTHER" id="PTHR46382:SF1">
    <property type="entry name" value="PHOSPHATIDATE CYTIDYLYLTRANSFERASE"/>
    <property type="match status" value="1"/>
</dbReference>
<dbReference type="Pfam" id="PF01148">
    <property type="entry name" value="CTP_transf_1"/>
    <property type="match status" value="1"/>
</dbReference>
<dbReference type="PROSITE" id="PS01315">
    <property type="entry name" value="CDS"/>
    <property type="match status" value="1"/>
</dbReference>
<organism>
    <name type="scientific">Brucella melitensis biotype 1 (strain ATCC 23456 / CCUG 17765 / NCTC 10094 / 16M)</name>
    <dbReference type="NCBI Taxonomy" id="224914"/>
    <lineage>
        <taxon>Bacteria</taxon>
        <taxon>Pseudomonadati</taxon>
        <taxon>Pseudomonadota</taxon>
        <taxon>Alphaproteobacteria</taxon>
        <taxon>Hyphomicrobiales</taxon>
        <taxon>Brucellaceae</taxon>
        <taxon>Brucella/Ochrobactrum group</taxon>
        <taxon>Brucella</taxon>
    </lineage>
</organism>
<evidence type="ECO:0000250" key="1"/>
<evidence type="ECO:0000255" key="2"/>
<evidence type="ECO:0000305" key="3"/>
<gene>
    <name type="primary">cdsA</name>
    <name type="ordered locus">BMEI0828</name>
</gene>
<name>CDSA_BRUME</name>
<comment type="catalytic activity">
    <reaction>
        <text>a 1,2-diacyl-sn-glycero-3-phosphate + CTP + H(+) = a CDP-1,2-diacyl-sn-glycerol + diphosphate</text>
        <dbReference type="Rhea" id="RHEA:16229"/>
        <dbReference type="ChEBI" id="CHEBI:15378"/>
        <dbReference type="ChEBI" id="CHEBI:33019"/>
        <dbReference type="ChEBI" id="CHEBI:37563"/>
        <dbReference type="ChEBI" id="CHEBI:58332"/>
        <dbReference type="ChEBI" id="CHEBI:58608"/>
        <dbReference type="EC" id="2.7.7.41"/>
    </reaction>
</comment>
<comment type="pathway">
    <text>Phospholipid metabolism; CDP-diacylglycerol biosynthesis; CDP-diacylglycerol from sn-glycerol 3-phosphate: step 3/3.</text>
</comment>
<comment type="subcellular location">
    <subcellularLocation>
        <location evidence="1">Cell inner membrane</location>
        <topology evidence="1">Multi-pass membrane protein</topology>
    </subcellularLocation>
</comment>
<comment type="similarity">
    <text evidence="3">Belongs to the CDS family.</text>
</comment>
<comment type="sequence caution" evidence="3">
    <conflict type="erroneous initiation">
        <sequence resource="EMBL-CDS" id="AAL52009"/>
    </conflict>
</comment>
<keyword id="KW-0997">Cell inner membrane</keyword>
<keyword id="KW-1003">Cell membrane</keyword>
<keyword id="KW-0444">Lipid biosynthesis</keyword>
<keyword id="KW-0443">Lipid metabolism</keyword>
<keyword id="KW-0472">Membrane</keyword>
<keyword id="KW-0548">Nucleotidyltransferase</keyword>
<keyword id="KW-0594">Phospholipid biosynthesis</keyword>
<keyword id="KW-1208">Phospholipid metabolism</keyword>
<keyword id="KW-0808">Transferase</keyword>
<keyword id="KW-0812">Transmembrane</keyword>
<keyword id="KW-1133">Transmembrane helix</keyword>
<proteinExistence type="inferred from homology"/>